<gene>
    <name evidence="1" type="primary">hmp</name>
</gene>
<evidence type="ECO:0000255" key="1">
    <source>
        <dbReference type="HAMAP-Rule" id="MF_01252"/>
    </source>
</evidence>
<evidence type="ECO:0000255" key="2">
    <source>
        <dbReference type="PROSITE-ProRule" id="PRU00238"/>
    </source>
</evidence>
<dbReference type="EC" id="1.14.12.17" evidence="1"/>
<dbReference type="EMBL" id="AB035325">
    <property type="protein sequence ID" value="BAC16771.1"/>
    <property type="molecule type" value="Genomic_DNA"/>
</dbReference>
<dbReference type="SMR" id="Q8GAZ4"/>
<dbReference type="GO" id="GO:0071949">
    <property type="term" value="F:FAD binding"/>
    <property type="evidence" value="ECO:0007669"/>
    <property type="project" value="InterPro"/>
</dbReference>
<dbReference type="GO" id="GO:0020037">
    <property type="term" value="F:heme binding"/>
    <property type="evidence" value="ECO:0007669"/>
    <property type="project" value="InterPro"/>
</dbReference>
<dbReference type="GO" id="GO:0046872">
    <property type="term" value="F:metal ion binding"/>
    <property type="evidence" value="ECO:0007669"/>
    <property type="project" value="UniProtKB-KW"/>
</dbReference>
<dbReference type="GO" id="GO:0008941">
    <property type="term" value="F:nitric oxide dioxygenase NAD(P)H activity"/>
    <property type="evidence" value="ECO:0007669"/>
    <property type="project" value="UniProtKB-UniRule"/>
</dbReference>
<dbReference type="GO" id="GO:0019825">
    <property type="term" value="F:oxygen binding"/>
    <property type="evidence" value="ECO:0007669"/>
    <property type="project" value="InterPro"/>
</dbReference>
<dbReference type="GO" id="GO:0005344">
    <property type="term" value="F:oxygen carrier activity"/>
    <property type="evidence" value="ECO:0007669"/>
    <property type="project" value="UniProtKB-UniRule"/>
</dbReference>
<dbReference type="GO" id="GO:0071500">
    <property type="term" value="P:cellular response to nitrosative stress"/>
    <property type="evidence" value="ECO:0007669"/>
    <property type="project" value="TreeGrafter"/>
</dbReference>
<dbReference type="GO" id="GO:0046210">
    <property type="term" value="P:nitric oxide catabolic process"/>
    <property type="evidence" value="ECO:0007669"/>
    <property type="project" value="TreeGrafter"/>
</dbReference>
<dbReference type="GO" id="GO:0009636">
    <property type="term" value="P:response to toxic substance"/>
    <property type="evidence" value="ECO:0007669"/>
    <property type="project" value="UniProtKB-KW"/>
</dbReference>
<dbReference type="CDD" id="cd06184">
    <property type="entry name" value="flavohem_like_fad_nad_binding"/>
    <property type="match status" value="1"/>
</dbReference>
<dbReference type="CDD" id="cd14780">
    <property type="entry name" value="HmpPa-globin-like"/>
    <property type="match status" value="1"/>
</dbReference>
<dbReference type="FunFam" id="1.10.490.10:FF:000003">
    <property type="entry name" value="Flavohemoprotein"/>
    <property type="match status" value="1"/>
</dbReference>
<dbReference type="FunFam" id="2.40.30.10:FF:000034">
    <property type="entry name" value="Flavohemoprotein"/>
    <property type="match status" value="1"/>
</dbReference>
<dbReference type="FunFam" id="3.40.50.80:FF:000010">
    <property type="entry name" value="Flavohemoprotein"/>
    <property type="match status" value="1"/>
</dbReference>
<dbReference type="Gene3D" id="1.10.490.10">
    <property type="entry name" value="Globins"/>
    <property type="match status" value="1"/>
</dbReference>
<dbReference type="Gene3D" id="3.40.50.80">
    <property type="entry name" value="Nucleotide-binding domain of ferredoxin-NADP reductase (FNR) module"/>
    <property type="match status" value="1"/>
</dbReference>
<dbReference type="Gene3D" id="2.40.30.10">
    <property type="entry name" value="Translation factors"/>
    <property type="match status" value="1"/>
</dbReference>
<dbReference type="HAMAP" id="MF_01252">
    <property type="entry name" value="Hmp"/>
    <property type="match status" value="1"/>
</dbReference>
<dbReference type="InterPro" id="IPR008333">
    <property type="entry name" value="Cbr1-like_FAD-bd_dom"/>
</dbReference>
<dbReference type="InterPro" id="IPR017927">
    <property type="entry name" value="FAD-bd_FR_type"/>
</dbReference>
<dbReference type="InterPro" id="IPR039261">
    <property type="entry name" value="FNR_nucleotide-bd"/>
</dbReference>
<dbReference type="InterPro" id="IPR000971">
    <property type="entry name" value="Globin"/>
</dbReference>
<dbReference type="InterPro" id="IPR009050">
    <property type="entry name" value="Globin-like_sf"/>
</dbReference>
<dbReference type="InterPro" id="IPR012292">
    <property type="entry name" value="Globin/Proto"/>
</dbReference>
<dbReference type="InterPro" id="IPR023950">
    <property type="entry name" value="Hmp"/>
</dbReference>
<dbReference type="InterPro" id="IPR001433">
    <property type="entry name" value="OxRdtase_FAD/NAD-bd"/>
</dbReference>
<dbReference type="InterPro" id="IPR017938">
    <property type="entry name" value="Riboflavin_synthase-like_b-brl"/>
</dbReference>
<dbReference type="NCBIfam" id="NF009805">
    <property type="entry name" value="PRK13289.1"/>
    <property type="match status" value="1"/>
</dbReference>
<dbReference type="PANTHER" id="PTHR43396">
    <property type="entry name" value="FLAVOHEMOPROTEIN"/>
    <property type="match status" value="1"/>
</dbReference>
<dbReference type="PANTHER" id="PTHR43396:SF3">
    <property type="entry name" value="FLAVOHEMOPROTEIN"/>
    <property type="match status" value="1"/>
</dbReference>
<dbReference type="Pfam" id="PF00970">
    <property type="entry name" value="FAD_binding_6"/>
    <property type="match status" value="1"/>
</dbReference>
<dbReference type="Pfam" id="PF00042">
    <property type="entry name" value="Globin"/>
    <property type="match status" value="1"/>
</dbReference>
<dbReference type="Pfam" id="PF00175">
    <property type="entry name" value="NAD_binding_1"/>
    <property type="match status" value="1"/>
</dbReference>
<dbReference type="PRINTS" id="PR00409">
    <property type="entry name" value="PHDIOXRDTASE"/>
</dbReference>
<dbReference type="SUPFAM" id="SSF52343">
    <property type="entry name" value="Ferredoxin reductase-like, C-terminal NADP-linked domain"/>
    <property type="match status" value="1"/>
</dbReference>
<dbReference type="SUPFAM" id="SSF46458">
    <property type="entry name" value="Globin-like"/>
    <property type="match status" value="1"/>
</dbReference>
<dbReference type="SUPFAM" id="SSF63380">
    <property type="entry name" value="Riboflavin synthase domain-like"/>
    <property type="match status" value="1"/>
</dbReference>
<dbReference type="PROSITE" id="PS51384">
    <property type="entry name" value="FAD_FR"/>
    <property type="match status" value="1"/>
</dbReference>
<dbReference type="PROSITE" id="PS01033">
    <property type="entry name" value="GLOBIN"/>
    <property type="match status" value="1"/>
</dbReference>
<sequence>MLSAEHRAIVKATVPLLESGGEALTTHFYKTMLAEYPSVRPLFNQAHQQSGDQPRALANAVLMYARHIDQLEQLGGLVSQIVNKHVALNILPEHYPIVGACLLRAIREVLGAEIATDAVIEAWGAAYQQLADLLIGLEENVYVEKETATGGWRGTRAFVVARKVKESDEITSFYLRPADGGELLEFHPGQYIGLKLIVDGEEIRRNYSLSAAANGREYRISVKREPNGKASNYLHDSVNEGATLDLLTPSGDFTLEHNDKPLVLISGGVGITPTLAMLNAALQTSRPIHFIHATRHGGVHAFRDHIDELAARHPQLKRFYVYEKPRHDDEAHHAEGYIDEARLIEWLPATRDVDVYFLGPKSFMQAVKRHLKTIGVPEKQSRYEFFGPASALD</sequence>
<proteinExistence type="inferred from homology"/>
<accession>Q8GAZ4</accession>
<protein>
    <recommendedName>
        <fullName evidence="1">Flavohemoprotein</fullName>
    </recommendedName>
    <alternativeName>
        <fullName evidence="1">Flavohemoglobin</fullName>
    </alternativeName>
    <alternativeName>
        <fullName evidence="1">Hemoglobin-like protein</fullName>
    </alternativeName>
    <alternativeName>
        <fullName evidence="1">Nitric oxide dioxygenase</fullName>
        <shortName evidence="1">NO oxygenase</shortName>
        <shortName evidence="1">NOD</shortName>
        <ecNumber evidence="1">1.14.12.17</ecNumber>
    </alternativeName>
</protein>
<reference key="1">
    <citation type="journal article" date="2002" name="J. Bacteriol.">
        <title>Differential expression of two catechol 1,2-dioxygenases in Burkholderia sp. strain TH2.</title>
        <authorList>
            <person name="Suzuki K."/>
            <person name="Ichimura A."/>
            <person name="Ogawa N."/>
            <person name="Hasebe A."/>
            <person name="Miyashita K."/>
        </authorList>
    </citation>
    <scope>NUCLEOTIDE SEQUENCE [GENOMIC DNA]</scope>
</reference>
<keyword id="KW-0216">Detoxification</keyword>
<keyword id="KW-0274">FAD</keyword>
<keyword id="KW-0285">Flavoprotein</keyword>
<keyword id="KW-0349">Heme</keyword>
<keyword id="KW-0408">Iron</keyword>
<keyword id="KW-0479">Metal-binding</keyword>
<keyword id="KW-0520">NAD</keyword>
<keyword id="KW-0521">NADP</keyword>
<keyword id="KW-0560">Oxidoreductase</keyword>
<keyword id="KW-0561">Oxygen transport</keyword>
<keyword id="KW-0813">Transport</keyword>
<feature type="chain" id="PRO_0000052428" description="Flavohemoprotein">
    <location>
        <begin position="1"/>
        <end position="393"/>
    </location>
</feature>
<feature type="domain" description="Globin" evidence="2">
    <location>
        <begin position="1"/>
        <end position="139"/>
    </location>
</feature>
<feature type="domain" description="FAD-binding FR-type" evidence="1">
    <location>
        <begin position="153"/>
        <end position="256"/>
    </location>
</feature>
<feature type="region of interest" description="Reductase">
    <location>
        <begin position="150"/>
        <end position="393"/>
    </location>
</feature>
<feature type="active site" description="Charge relay system" evidence="1">
    <location>
        <position position="95"/>
    </location>
</feature>
<feature type="active site" description="Charge relay system" evidence="1">
    <location>
        <position position="138"/>
    </location>
</feature>
<feature type="binding site" description="proximal binding residue" evidence="1">
    <location>
        <position position="85"/>
    </location>
    <ligand>
        <name>heme b</name>
        <dbReference type="ChEBI" id="CHEBI:60344"/>
    </ligand>
    <ligandPart>
        <name>Fe</name>
        <dbReference type="ChEBI" id="CHEBI:18248"/>
    </ligandPart>
</feature>
<feature type="binding site" evidence="1">
    <location>
        <position position="191"/>
    </location>
    <ligand>
        <name>FAD</name>
        <dbReference type="ChEBI" id="CHEBI:57692"/>
    </ligand>
</feature>
<feature type="binding site" evidence="1">
    <location>
        <begin position="205"/>
        <end position="208"/>
    </location>
    <ligand>
        <name>FAD</name>
        <dbReference type="ChEBI" id="CHEBI:57692"/>
    </ligand>
</feature>
<feature type="binding site" evidence="1">
    <location>
        <begin position="268"/>
        <end position="273"/>
    </location>
    <ligand>
        <name>NADP(+)</name>
        <dbReference type="ChEBI" id="CHEBI:58349"/>
    </ligand>
</feature>
<feature type="binding site" evidence="1">
    <location>
        <begin position="385"/>
        <end position="388"/>
    </location>
    <ligand>
        <name>FAD</name>
        <dbReference type="ChEBI" id="CHEBI:57692"/>
    </ligand>
</feature>
<feature type="site" description="Involved in heme-bound ligand stabilization and O-O bond activation" evidence="1">
    <location>
        <position position="29"/>
    </location>
</feature>
<feature type="site" description="Influences the redox potential of the prosthetic heme and FAD groups" evidence="1">
    <location>
        <position position="84"/>
    </location>
</feature>
<feature type="site" description="Influences the redox potential of the prosthetic heme and FAD groups" evidence="1">
    <location>
        <position position="384"/>
    </location>
</feature>
<comment type="function">
    <text evidence="1">Is involved in NO detoxification in an aerobic process, termed nitric oxide dioxygenase (NOD) reaction that utilizes O(2) and NAD(P)H to convert NO to nitrate, which protects the bacterium from various noxious nitrogen compounds. Therefore, plays a central role in the inducible response to nitrosative stress.</text>
</comment>
<comment type="catalytic activity">
    <reaction evidence="1">
        <text>2 nitric oxide + NADPH + 2 O2 = 2 nitrate + NADP(+) + H(+)</text>
        <dbReference type="Rhea" id="RHEA:19465"/>
        <dbReference type="ChEBI" id="CHEBI:15378"/>
        <dbReference type="ChEBI" id="CHEBI:15379"/>
        <dbReference type="ChEBI" id="CHEBI:16480"/>
        <dbReference type="ChEBI" id="CHEBI:17632"/>
        <dbReference type="ChEBI" id="CHEBI:57783"/>
        <dbReference type="ChEBI" id="CHEBI:58349"/>
        <dbReference type="EC" id="1.14.12.17"/>
    </reaction>
</comment>
<comment type="catalytic activity">
    <reaction evidence="1">
        <text>2 nitric oxide + NADH + 2 O2 = 2 nitrate + NAD(+) + H(+)</text>
        <dbReference type="Rhea" id="RHEA:19469"/>
        <dbReference type="ChEBI" id="CHEBI:15378"/>
        <dbReference type="ChEBI" id="CHEBI:15379"/>
        <dbReference type="ChEBI" id="CHEBI:16480"/>
        <dbReference type="ChEBI" id="CHEBI:17632"/>
        <dbReference type="ChEBI" id="CHEBI:57540"/>
        <dbReference type="ChEBI" id="CHEBI:57945"/>
        <dbReference type="EC" id="1.14.12.17"/>
    </reaction>
</comment>
<comment type="cofactor">
    <cofactor evidence="1">
        <name>heme b</name>
        <dbReference type="ChEBI" id="CHEBI:60344"/>
    </cofactor>
    <text evidence="1">Binds 1 heme b (iron(II)-protoporphyrin IX) group per subunit.</text>
</comment>
<comment type="cofactor">
    <cofactor evidence="1">
        <name>FAD</name>
        <dbReference type="ChEBI" id="CHEBI:57692"/>
    </cofactor>
    <text evidence="1">Binds 1 FAD per subunit.</text>
</comment>
<comment type="domain">
    <text>Consists of two distinct domains; an N-terminal heme-containing oxygen-binding domain and a C-terminal reductase domain with binding sites for FAD and NAD(P)H.</text>
</comment>
<comment type="similarity">
    <text evidence="1">Belongs to the globin family. Two-domain flavohemoproteins subfamily.</text>
</comment>
<comment type="similarity">
    <text evidence="1">In the C-terminal section; belongs to the flavoprotein pyridine nucleotide cytochrome reductase family.</text>
</comment>
<organism>
    <name type="scientific">Burkholderia sp. (strain TH2)</name>
    <dbReference type="NCBI Taxonomy" id="109791"/>
    <lineage>
        <taxon>Bacteria</taxon>
        <taxon>Pseudomonadati</taxon>
        <taxon>Pseudomonadota</taxon>
        <taxon>Betaproteobacteria</taxon>
        <taxon>Burkholderiales</taxon>
        <taxon>Burkholderiaceae</taxon>
        <taxon>Burkholderia</taxon>
    </lineage>
</organism>
<name>HMP_BURST</name>